<comment type="function">
    <text evidence="1">Sequence-specific transcription factor which is part of a developmental regulatory system that provides cells with specific positional identities on the anterior-posterior axis.</text>
</comment>
<comment type="subcellular location">
    <subcellularLocation>
        <location evidence="2">Nucleus</location>
    </subcellularLocation>
</comment>
<comment type="similarity">
    <text evidence="4">Belongs to the Antp homeobox family. Deformed subfamily.</text>
</comment>
<organism>
    <name type="scientific">Takifugu rubripes</name>
    <name type="common">Japanese pufferfish</name>
    <name type="synonym">Fugu rubripes</name>
    <dbReference type="NCBI Taxonomy" id="31033"/>
    <lineage>
        <taxon>Eukaryota</taxon>
        <taxon>Metazoa</taxon>
        <taxon>Chordata</taxon>
        <taxon>Craniata</taxon>
        <taxon>Vertebrata</taxon>
        <taxon>Euteleostomi</taxon>
        <taxon>Actinopterygii</taxon>
        <taxon>Neopterygii</taxon>
        <taxon>Teleostei</taxon>
        <taxon>Neoteleostei</taxon>
        <taxon>Acanthomorphata</taxon>
        <taxon>Eupercaria</taxon>
        <taxon>Tetraodontiformes</taxon>
        <taxon>Tetradontoidea</taxon>
        <taxon>Tetraodontidae</taxon>
        <taxon>Takifugu</taxon>
    </lineage>
</organism>
<evidence type="ECO:0000250" key="1"/>
<evidence type="ECO:0000255" key="2">
    <source>
        <dbReference type="PROSITE-ProRule" id="PRU00108"/>
    </source>
</evidence>
<evidence type="ECO:0000256" key="3">
    <source>
        <dbReference type="SAM" id="MobiDB-lite"/>
    </source>
</evidence>
<evidence type="ECO:0000305" key="4"/>
<sequence length="288" mass="32723">MAMSSYLINSNYVDPKFPPCEEYSQSDYLPNHSPDYYSSQRQEPAAFQPDSLYHHHPHQQQRAEPPYTQCQRAGQPASVVMSPRGHVLPPSGLQTTPVPEQSHRCESVTPSPPPPPSCGQTPHSQGASSPASTRKDPVVYPWMKKVHVNIVSSNYTGGEPKRSRTAYTRQQVLELEKEFHYNRYLTRRRRVEIAHTLCLSERQIKIWFQNRRMKWKKDHKLPNTKVRSGSTNTNSQVLTGFPKPHWTPIAGRDTCMIYAPSLAVPDCETECRSGSHASDHPSLHFGPE</sequence>
<protein>
    <recommendedName>
        <fullName>Homeobox protein Hox-B4a</fullName>
    </recommendedName>
    <alternativeName>
        <fullName>FrHOXB-4</fullName>
    </alternativeName>
</protein>
<name>HXB4A_TAKRU</name>
<dbReference type="EMBL" id="U92575">
    <property type="protein sequence ID" value="AAC60205.1"/>
    <property type="molecule type" value="Genomic_DNA"/>
</dbReference>
<dbReference type="EMBL" id="DQ481665">
    <property type="protein sequence ID" value="ABF22416.1"/>
    <property type="molecule type" value="Genomic_DNA"/>
</dbReference>
<dbReference type="RefSeq" id="XP_011601866.1">
    <property type="nucleotide sequence ID" value="XM_011603564.1"/>
</dbReference>
<dbReference type="SMR" id="O13074"/>
<dbReference type="FunCoup" id="O13074">
    <property type="interactions" value="218"/>
</dbReference>
<dbReference type="STRING" id="31033.ENSTRUP00000024388"/>
<dbReference type="GeneID" id="101061711"/>
<dbReference type="KEGG" id="tru:101061711"/>
<dbReference type="CTD" id="30340"/>
<dbReference type="HOGENOM" id="CLU_061398_0_0_1"/>
<dbReference type="InParanoid" id="O13074"/>
<dbReference type="OrthoDB" id="6159439at2759"/>
<dbReference type="Proteomes" id="UP000005226">
    <property type="component" value="Unplaced"/>
</dbReference>
<dbReference type="GO" id="GO:0005654">
    <property type="term" value="C:nucleoplasm"/>
    <property type="evidence" value="ECO:0007669"/>
    <property type="project" value="TreeGrafter"/>
</dbReference>
<dbReference type="GO" id="GO:0000981">
    <property type="term" value="F:DNA-binding transcription factor activity, RNA polymerase II-specific"/>
    <property type="evidence" value="ECO:0007669"/>
    <property type="project" value="InterPro"/>
</dbReference>
<dbReference type="GO" id="GO:0000978">
    <property type="term" value="F:RNA polymerase II cis-regulatory region sequence-specific DNA binding"/>
    <property type="evidence" value="ECO:0007669"/>
    <property type="project" value="TreeGrafter"/>
</dbReference>
<dbReference type="GO" id="GO:0009952">
    <property type="term" value="P:anterior/posterior pattern specification"/>
    <property type="evidence" value="ECO:0007669"/>
    <property type="project" value="TreeGrafter"/>
</dbReference>
<dbReference type="GO" id="GO:0048704">
    <property type="term" value="P:embryonic skeletal system morphogenesis"/>
    <property type="evidence" value="ECO:0007669"/>
    <property type="project" value="TreeGrafter"/>
</dbReference>
<dbReference type="GO" id="GO:0045944">
    <property type="term" value="P:positive regulation of transcription by RNA polymerase II"/>
    <property type="evidence" value="ECO:0007669"/>
    <property type="project" value="TreeGrafter"/>
</dbReference>
<dbReference type="CDD" id="cd00086">
    <property type="entry name" value="homeodomain"/>
    <property type="match status" value="1"/>
</dbReference>
<dbReference type="FunFam" id="1.10.10.60:FF:000029">
    <property type="entry name" value="Homeobox protein Hox-D4"/>
    <property type="match status" value="1"/>
</dbReference>
<dbReference type="Gene3D" id="1.10.10.60">
    <property type="entry name" value="Homeodomain-like"/>
    <property type="match status" value="1"/>
</dbReference>
<dbReference type="InterPro" id="IPR050609">
    <property type="entry name" value="Antp_homeobox_Deformed_sf"/>
</dbReference>
<dbReference type="InterPro" id="IPR001356">
    <property type="entry name" value="HD"/>
</dbReference>
<dbReference type="InterPro" id="IPR020479">
    <property type="entry name" value="HD_metazoa"/>
</dbReference>
<dbReference type="InterPro" id="IPR017995">
    <property type="entry name" value="Homeobox_antennapedia"/>
</dbReference>
<dbReference type="InterPro" id="IPR001827">
    <property type="entry name" value="Homeobox_Antennapedia_CS"/>
</dbReference>
<dbReference type="InterPro" id="IPR017970">
    <property type="entry name" value="Homeobox_CS"/>
</dbReference>
<dbReference type="InterPro" id="IPR009057">
    <property type="entry name" value="Homeodomain-like_sf"/>
</dbReference>
<dbReference type="PANTHER" id="PTHR45771:SF3">
    <property type="entry name" value="HOMEOBOX PROTEIN HOX-B4"/>
    <property type="match status" value="1"/>
</dbReference>
<dbReference type="PANTHER" id="PTHR45771">
    <property type="entry name" value="HOMEOTIC PROTEIN DEFORMED"/>
    <property type="match status" value="1"/>
</dbReference>
<dbReference type="Pfam" id="PF00046">
    <property type="entry name" value="Homeodomain"/>
    <property type="match status" value="1"/>
</dbReference>
<dbReference type="PRINTS" id="PR00025">
    <property type="entry name" value="ANTENNAPEDIA"/>
</dbReference>
<dbReference type="PRINTS" id="PR00024">
    <property type="entry name" value="HOMEOBOX"/>
</dbReference>
<dbReference type="SMART" id="SM00389">
    <property type="entry name" value="HOX"/>
    <property type="match status" value="1"/>
</dbReference>
<dbReference type="SUPFAM" id="SSF46689">
    <property type="entry name" value="Homeodomain-like"/>
    <property type="match status" value="1"/>
</dbReference>
<dbReference type="PROSITE" id="PS00032">
    <property type="entry name" value="ANTENNAPEDIA"/>
    <property type="match status" value="1"/>
</dbReference>
<dbReference type="PROSITE" id="PS00027">
    <property type="entry name" value="HOMEOBOX_1"/>
    <property type="match status" value="1"/>
</dbReference>
<dbReference type="PROSITE" id="PS50071">
    <property type="entry name" value="HOMEOBOX_2"/>
    <property type="match status" value="1"/>
</dbReference>
<reference key="1">
    <citation type="journal article" date="1995" name="Proc. Natl. Acad. Sci. U.S.A.">
        <title>Detecting conserved regulatory elements with the model genome of the Japanese puffer fish, Fugu rubripes.</title>
        <authorList>
            <person name="Aparicio S."/>
            <person name="Morrison A."/>
            <person name="Gould A."/>
            <person name="Gilthorpe J."/>
            <person name="Chaudhuri C."/>
            <person name="Rigby P."/>
            <person name="Krumlauf R."/>
            <person name="Brenner S."/>
        </authorList>
    </citation>
    <scope>NUCLEOTIDE SEQUENCE [GENOMIC DNA]</scope>
</reference>
<reference key="2">
    <citation type="journal article" date="1997" name="Nat. Genet.">
        <title>Organization of the Fugu rubripes Hox clusters: evidence for continuing evolution of vertebrate Hox complexes.</title>
        <authorList>
            <person name="Aparicio S.J."/>
            <person name="Hawker K."/>
            <person name="Cottage A."/>
            <person name="Mikawa Y."/>
            <person name="Zuo L."/>
            <person name="Venkatesh B."/>
            <person name="Chen E."/>
            <person name="Krumlauf R."/>
            <person name="Brenner S."/>
        </authorList>
    </citation>
    <scope>NUCLEOTIDE SEQUENCE [GENOMIC DNA]</scope>
</reference>
<reference key="3">
    <citation type="journal article" date="2006" name="Proc. Natl. Acad. Sci. U.S.A.">
        <title>Highly conserved syntenic blocks at the vertebrate Hox loci and conserved regulatory elements within and outside Hox gene clusters.</title>
        <authorList>
            <person name="Lee A.P."/>
            <person name="Koh E.G.L."/>
            <person name="Tay A."/>
            <person name="Brenner S."/>
            <person name="Venkatesh B."/>
        </authorList>
    </citation>
    <scope>NUCLEOTIDE SEQUENCE [GENOMIC DNA]</scope>
</reference>
<keyword id="KW-0217">Developmental protein</keyword>
<keyword id="KW-0238">DNA-binding</keyword>
<keyword id="KW-0371">Homeobox</keyword>
<keyword id="KW-0539">Nucleus</keyword>
<keyword id="KW-1185">Reference proteome</keyword>
<keyword id="KW-0804">Transcription</keyword>
<keyword id="KW-0805">Transcription regulation</keyword>
<gene>
    <name type="primary">hoxb4a</name>
    <name type="synonym">hoxb4</name>
</gene>
<feature type="chain" id="PRO_0000200126" description="Homeobox protein Hox-B4a">
    <location>
        <begin position="1"/>
        <end position="288"/>
    </location>
</feature>
<feature type="DNA-binding region" description="Homeobox" evidence="2">
    <location>
        <begin position="160"/>
        <end position="219"/>
    </location>
</feature>
<feature type="region of interest" description="Disordered" evidence="3">
    <location>
        <begin position="10"/>
        <end position="136"/>
    </location>
</feature>
<feature type="short sequence motif" description="Antp-type hexapeptide">
    <location>
        <begin position="139"/>
        <end position="144"/>
    </location>
</feature>
<feature type="compositionally biased region" description="Polar residues" evidence="3">
    <location>
        <begin position="118"/>
        <end position="132"/>
    </location>
</feature>
<feature type="sequence conflict" description="In Ref. 1 and 2." evidence="4" ref="1 2">
    <original>Q</original>
    <variation>HPQH</variation>
    <location>
        <position position="59"/>
    </location>
</feature>
<feature type="sequence conflict" description="In Ref. 1 and 2." evidence="4" ref="1 2">
    <original>FPKPHWTPIAGRDTCMIYAPSLAVPDCETECRSGSH</original>
    <variation>SQNRTGPL</variation>
    <location>
        <begin position="241"/>
        <end position="276"/>
    </location>
</feature>
<proteinExistence type="inferred from homology"/>
<accession>O13074</accession>
<accession>Q1KKX8</accession>